<dbReference type="EMBL" id="CP001283">
    <property type="protein sequence ID" value="ACK87703.1"/>
    <property type="molecule type" value="Genomic_DNA"/>
</dbReference>
<dbReference type="RefSeq" id="WP_001085234.1">
    <property type="nucleotide sequence ID" value="NC_011773.1"/>
</dbReference>
<dbReference type="SMR" id="B7JKD7"/>
<dbReference type="GeneID" id="93010925"/>
<dbReference type="KEGG" id="bcu:BCAH820_0140"/>
<dbReference type="HOGENOM" id="CLU_131047_2_1_9"/>
<dbReference type="Proteomes" id="UP000001363">
    <property type="component" value="Chromosome"/>
</dbReference>
<dbReference type="GO" id="GO:0022625">
    <property type="term" value="C:cytosolic large ribosomal subunit"/>
    <property type="evidence" value="ECO:0007669"/>
    <property type="project" value="TreeGrafter"/>
</dbReference>
<dbReference type="GO" id="GO:0003735">
    <property type="term" value="F:structural constituent of ribosome"/>
    <property type="evidence" value="ECO:0007669"/>
    <property type="project" value="InterPro"/>
</dbReference>
<dbReference type="GO" id="GO:0006412">
    <property type="term" value="P:translation"/>
    <property type="evidence" value="ECO:0007669"/>
    <property type="project" value="UniProtKB-UniRule"/>
</dbReference>
<dbReference type="CDD" id="cd01658">
    <property type="entry name" value="Ribosomal_L30"/>
    <property type="match status" value="1"/>
</dbReference>
<dbReference type="FunFam" id="3.30.1390.20:FF:000001">
    <property type="entry name" value="50S ribosomal protein L30"/>
    <property type="match status" value="1"/>
</dbReference>
<dbReference type="Gene3D" id="3.30.1390.20">
    <property type="entry name" value="Ribosomal protein L30, ferredoxin-like fold domain"/>
    <property type="match status" value="1"/>
</dbReference>
<dbReference type="HAMAP" id="MF_01371_B">
    <property type="entry name" value="Ribosomal_uL30_B"/>
    <property type="match status" value="1"/>
</dbReference>
<dbReference type="InterPro" id="IPR036919">
    <property type="entry name" value="Ribo_uL30_ferredoxin-like_sf"/>
</dbReference>
<dbReference type="InterPro" id="IPR005996">
    <property type="entry name" value="Ribosomal_uL30_bac-type"/>
</dbReference>
<dbReference type="InterPro" id="IPR018038">
    <property type="entry name" value="Ribosomal_uL30_CS"/>
</dbReference>
<dbReference type="InterPro" id="IPR016082">
    <property type="entry name" value="Ribosomal_uL30_ferredoxin-like"/>
</dbReference>
<dbReference type="NCBIfam" id="TIGR01308">
    <property type="entry name" value="rpmD_bact"/>
    <property type="match status" value="1"/>
</dbReference>
<dbReference type="PANTHER" id="PTHR15892:SF2">
    <property type="entry name" value="LARGE RIBOSOMAL SUBUNIT PROTEIN UL30M"/>
    <property type="match status" value="1"/>
</dbReference>
<dbReference type="PANTHER" id="PTHR15892">
    <property type="entry name" value="MITOCHONDRIAL RIBOSOMAL PROTEIN L30"/>
    <property type="match status" value="1"/>
</dbReference>
<dbReference type="Pfam" id="PF00327">
    <property type="entry name" value="Ribosomal_L30"/>
    <property type="match status" value="1"/>
</dbReference>
<dbReference type="PIRSF" id="PIRSF002211">
    <property type="entry name" value="Ribosomal_L30_bac-type"/>
    <property type="match status" value="1"/>
</dbReference>
<dbReference type="SUPFAM" id="SSF55129">
    <property type="entry name" value="Ribosomal protein L30p/L7e"/>
    <property type="match status" value="1"/>
</dbReference>
<dbReference type="PROSITE" id="PS00634">
    <property type="entry name" value="RIBOSOMAL_L30"/>
    <property type="match status" value="1"/>
</dbReference>
<evidence type="ECO:0000255" key="1">
    <source>
        <dbReference type="HAMAP-Rule" id="MF_01371"/>
    </source>
</evidence>
<evidence type="ECO:0000305" key="2"/>
<accession>B7JKD7</accession>
<organism>
    <name type="scientific">Bacillus cereus (strain AH820)</name>
    <dbReference type="NCBI Taxonomy" id="405535"/>
    <lineage>
        <taxon>Bacteria</taxon>
        <taxon>Bacillati</taxon>
        <taxon>Bacillota</taxon>
        <taxon>Bacilli</taxon>
        <taxon>Bacillales</taxon>
        <taxon>Bacillaceae</taxon>
        <taxon>Bacillus</taxon>
        <taxon>Bacillus cereus group</taxon>
    </lineage>
</organism>
<proteinExistence type="inferred from homology"/>
<sequence length="60" mass="6556">MAKKLEITLTRSVIGRPQDQRATVEALGLKKLNSTVVKEETPAILGMINKVSHLVTVKEA</sequence>
<name>RL30_BACC0</name>
<feature type="chain" id="PRO_1000144647" description="Large ribosomal subunit protein uL30">
    <location>
        <begin position="1"/>
        <end position="60"/>
    </location>
</feature>
<comment type="subunit">
    <text evidence="1">Part of the 50S ribosomal subunit.</text>
</comment>
<comment type="similarity">
    <text evidence="1">Belongs to the universal ribosomal protein uL30 family.</text>
</comment>
<reference key="1">
    <citation type="submission" date="2008-10" db="EMBL/GenBank/DDBJ databases">
        <title>Genome sequence of Bacillus cereus AH820.</title>
        <authorList>
            <person name="Dodson R.J."/>
            <person name="Durkin A.S."/>
            <person name="Rosovitz M.J."/>
            <person name="Rasko D.A."/>
            <person name="Hoffmaster A."/>
            <person name="Ravel J."/>
            <person name="Sutton G."/>
        </authorList>
    </citation>
    <scope>NUCLEOTIDE SEQUENCE [LARGE SCALE GENOMIC DNA]</scope>
    <source>
        <strain>AH820</strain>
    </source>
</reference>
<keyword id="KW-0687">Ribonucleoprotein</keyword>
<keyword id="KW-0689">Ribosomal protein</keyword>
<gene>
    <name evidence="1" type="primary">rpmD</name>
    <name type="ordered locus">BCAH820_0140</name>
</gene>
<protein>
    <recommendedName>
        <fullName evidence="1">Large ribosomal subunit protein uL30</fullName>
    </recommendedName>
    <alternativeName>
        <fullName evidence="2">50S ribosomal protein L30</fullName>
    </alternativeName>
</protein>